<keyword id="KW-0106">Calcium</keyword>
<keyword id="KW-0143">Chaperone</keyword>
<keyword id="KW-0903">Direct protein sequencing</keyword>
<keyword id="KW-1015">Disulfide bond</keyword>
<keyword id="KW-0256">Endoplasmic reticulum</keyword>
<keyword id="KW-0430">Lectin</keyword>
<keyword id="KW-0479">Metal-binding</keyword>
<keyword id="KW-1185">Reference proteome</keyword>
<keyword id="KW-0677">Repeat</keyword>
<keyword id="KW-0732">Signal</keyword>
<keyword id="KW-0862">Zinc</keyword>
<name>CALR_BOMMO</name>
<reference evidence="10" key="1">
    <citation type="journal article" date="2003" name="Int. J. Ind. Entomol.">
        <title>Molecular cloning of a cDNA encoding putative calreticulin from the silkworm, Bombyx mori.</title>
        <authorList>
            <person name="Kim S.R."/>
            <person name="Lee K.S."/>
            <person name="Kim I."/>
            <person name="Kang S.W."/>
            <person name="Nho S.K."/>
            <person name="Sohn H.D."/>
            <person name="Jin B.R."/>
        </authorList>
    </citation>
    <scope>NUCLEOTIDE SEQUENCE [MRNA]</scope>
    <scope>TISSUE SPECIFICITY</scope>
</reference>
<reference evidence="9 10" key="2">
    <citation type="journal article" date="2005" name="Mol. Biol. Rep.">
        <title>Endoplasmic reticulum stress response of Bombyx mori calreticulin.</title>
        <authorList>
            <person name="Goo T.W."/>
            <person name="Park S."/>
            <person name="Jin B.R."/>
            <person name="Yun E.Y."/>
            <person name="Kim I."/>
            <person name="Nho S.-K."/>
            <person name="Kang S.-W."/>
            <person name="Kwon O.-Y."/>
        </authorList>
    </citation>
    <scope>NUCLEOTIDE SEQUENCE [MRNA]</scope>
    <scope>TISSUE SPECIFICITY</scope>
    <scope>INDUCTION</scope>
</reference>
<reference evidence="11" key="3">
    <citation type="submission" date="2002-08" db="EMBL/GenBank/DDBJ databases">
        <authorList>
            <person name="Takahashi T."/>
            <person name="Yamashita T."/>
        </authorList>
    </citation>
    <scope>NUCLEOTIDE SEQUENCE [MRNA]</scope>
    <source>
        <strain>p50T</strain>
        <tissue evidence="11">Fat body</tissue>
    </source>
</reference>
<reference evidence="9" key="4">
    <citation type="journal article" date="2001" name="Yi Chuan Xue Bao">
        <title>Protein database for several tissues derived from five instar of silkworm.</title>
        <authorList>
            <person name="Zhong B.-X."/>
        </authorList>
    </citation>
    <scope>PROTEIN SEQUENCE OF 20-49</scope>
    <source>
        <strain evidence="6">Xinhang X Keming</strain>
        <tissue evidence="6">Body wall</tissue>
        <tissue evidence="6">Fat body</tissue>
    </source>
</reference>
<proteinExistence type="evidence at protein level"/>
<comment type="function">
    <text evidence="1">Molecular calcium-binding chaperone promoting folding, oligomeric assembly and quality control in the ER via the calreticulin/calnexin cycle. This lectin may interact transiently with almost all of the monoglucosylated glycoproteins that are synthesized in the ER (By similarity).</text>
</comment>
<comment type="subunit">
    <text evidence="3">Monomer.</text>
</comment>
<comment type="subcellular location">
    <subcellularLocation>
        <location>Endoplasmic reticulum lumen</location>
    </subcellularLocation>
</comment>
<comment type="tissue specificity">
    <text evidence="7 8">Expressed in fat bodies. Not expressed in midgut, silk gland, ovary or testis.</text>
</comment>
<comment type="induction">
    <text evidence="7">Induced by disturbances in intracellular calcium levels caused by the chelators BAPTA-AM and EDTA, the endoplasmic reticulum calcium-ATPase inhibitor thapsigargin and by calcium. Not induced by the endoplasmic reticulum stress-inducing drugs brefeldin A, DTT and tunicamycin, or by heat stress and hydrogen peroxide.</text>
</comment>
<comment type="domain">
    <text evidence="3">Can be divided into a N-terminal globular domain, a proline-rich P-domain forming an elongated arm-like structure and a C-terminal acidic domain. The P-domain binds one molecule of calcium with high affinity, whereas the acidic C-domain binds multiple calcium ions with low affinity (By similarity).</text>
</comment>
<comment type="domain">
    <text evidence="3">The interaction with glycans occurs through a binding site in the globular lectin domain.</text>
</comment>
<comment type="domain">
    <text evidence="3">The zinc binding sites are localized to the N-domain.</text>
</comment>
<comment type="similarity">
    <text evidence="4">Belongs to the calreticulin family.</text>
</comment>
<dbReference type="EMBL" id="AY297158">
    <property type="protein sequence ID" value="AAP50845.1"/>
    <property type="molecule type" value="mRNA"/>
</dbReference>
<dbReference type="EMBL" id="AB090887">
    <property type="protein sequence ID" value="BAC57964.1"/>
    <property type="molecule type" value="mRNA"/>
</dbReference>
<dbReference type="RefSeq" id="NP_001037075.1">
    <property type="nucleotide sequence ID" value="NM_001043610.1"/>
</dbReference>
<dbReference type="SMR" id="Q7Z1E6"/>
<dbReference type="FunCoup" id="Q7Z1E6">
    <property type="interactions" value="1527"/>
</dbReference>
<dbReference type="STRING" id="7091.Q7Z1E6"/>
<dbReference type="PaxDb" id="7091-BGIBMGA000475-TA"/>
<dbReference type="EnsemblMetazoa" id="NM_001043610.1">
    <property type="protein sequence ID" value="NP_001037075.1"/>
    <property type="gene ID" value="GeneID_692629"/>
</dbReference>
<dbReference type="GeneID" id="692629"/>
<dbReference type="KEGG" id="bmor:692629"/>
<dbReference type="CTD" id="45841"/>
<dbReference type="eggNOG" id="KOG0674">
    <property type="taxonomic scope" value="Eukaryota"/>
</dbReference>
<dbReference type="HOGENOM" id="CLU_018224_0_2_1"/>
<dbReference type="InParanoid" id="Q7Z1E6"/>
<dbReference type="OrthoDB" id="411498at7088"/>
<dbReference type="Proteomes" id="UP000005204">
    <property type="component" value="Unassembled WGS sequence"/>
</dbReference>
<dbReference type="GO" id="GO:0005788">
    <property type="term" value="C:endoplasmic reticulum lumen"/>
    <property type="evidence" value="ECO:0007669"/>
    <property type="project" value="UniProtKB-SubCell"/>
</dbReference>
<dbReference type="GO" id="GO:0005789">
    <property type="term" value="C:endoplasmic reticulum membrane"/>
    <property type="evidence" value="ECO:0007669"/>
    <property type="project" value="TreeGrafter"/>
</dbReference>
<dbReference type="GO" id="GO:0005509">
    <property type="term" value="F:calcium ion binding"/>
    <property type="evidence" value="ECO:0007669"/>
    <property type="project" value="InterPro"/>
</dbReference>
<dbReference type="GO" id="GO:0030246">
    <property type="term" value="F:carbohydrate binding"/>
    <property type="evidence" value="ECO:0007669"/>
    <property type="project" value="UniProtKB-KW"/>
</dbReference>
<dbReference type="GO" id="GO:0051082">
    <property type="term" value="F:unfolded protein binding"/>
    <property type="evidence" value="ECO:0007669"/>
    <property type="project" value="InterPro"/>
</dbReference>
<dbReference type="GO" id="GO:0036503">
    <property type="term" value="P:ERAD pathway"/>
    <property type="evidence" value="ECO:0007669"/>
    <property type="project" value="TreeGrafter"/>
</dbReference>
<dbReference type="GO" id="GO:0006457">
    <property type="term" value="P:protein folding"/>
    <property type="evidence" value="ECO:0007669"/>
    <property type="project" value="InterPro"/>
</dbReference>
<dbReference type="FunFam" id="2.10.250.10:FF:000002">
    <property type="entry name" value="Calreticulin"/>
    <property type="match status" value="1"/>
</dbReference>
<dbReference type="FunFam" id="2.60.120.200:FF:000122">
    <property type="entry name" value="Calreticulin 3"/>
    <property type="match status" value="1"/>
</dbReference>
<dbReference type="Gene3D" id="2.60.120.200">
    <property type="match status" value="1"/>
</dbReference>
<dbReference type="Gene3D" id="2.10.250.10">
    <property type="entry name" value="Calreticulin/calnexin, P domain"/>
    <property type="match status" value="1"/>
</dbReference>
<dbReference type="InterPro" id="IPR001580">
    <property type="entry name" value="Calret/calnex"/>
</dbReference>
<dbReference type="InterPro" id="IPR018124">
    <property type="entry name" value="Calret/calnex_CS"/>
</dbReference>
<dbReference type="InterPro" id="IPR009169">
    <property type="entry name" value="Calreticulin"/>
</dbReference>
<dbReference type="InterPro" id="IPR009033">
    <property type="entry name" value="Calreticulin/calnexin_P_dom_sf"/>
</dbReference>
<dbReference type="InterPro" id="IPR013320">
    <property type="entry name" value="ConA-like_dom_sf"/>
</dbReference>
<dbReference type="PANTHER" id="PTHR11073:SF2">
    <property type="entry name" value="CALRETICULIN"/>
    <property type="match status" value="1"/>
</dbReference>
<dbReference type="PANTHER" id="PTHR11073">
    <property type="entry name" value="CALRETICULIN AND CALNEXIN"/>
    <property type="match status" value="1"/>
</dbReference>
<dbReference type="Pfam" id="PF00262">
    <property type="entry name" value="Calreticulin"/>
    <property type="match status" value="2"/>
</dbReference>
<dbReference type="PIRSF" id="PIRSF002356">
    <property type="entry name" value="Calreticulin"/>
    <property type="match status" value="1"/>
</dbReference>
<dbReference type="PRINTS" id="PR00626">
    <property type="entry name" value="CALRETICULIN"/>
</dbReference>
<dbReference type="SUPFAM" id="SSF49899">
    <property type="entry name" value="Concanavalin A-like lectins/glucanases"/>
    <property type="match status" value="1"/>
</dbReference>
<dbReference type="SUPFAM" id="SSF63887">
    <property type="entry name" value="P-domain of calnexin/calreticulin"/>
    <property type="match status" value="1"/>
</dbReference>
<dbReference type="PROSITE" id="PS00803">
    <property type="entry name" value="CALRETICULIN_1"/>
    <property type="match status" value="1"/>
</dbReference>
<dbReference type="PROSITE" id="PS00804">
    <property type="entry name" value="CALRETICULIN_2"/>
    <property type="match status" value="1"/>
</dbReference>
<dbReference type="PROSITE" id="PS00805">
    <property type="entry name" value="CALRETICULIN_REPEAT"/>
    <property type="match status" value="3"/>
</dbReference>
<dbReference type="PROSITE" id="PS00014">
    <property type="entry name" value="ER_TARGET"/>
    <property type="match status" value="1"/>
</dbReference>
<accession>Q7Z1E6</accession>
<accession>P82199</accession>
<accession>Q869E0</accession>
<feature type="signal peptide" evidence="4">
    <location>
        <begin position="1"/>
        <end position="19"/>
    </location>
</feature>
<feature type="chain" id="PRO_0000279696" description="Calreticulin" evidence="4">
    <location>
        <begin position="20"/>
        <end position="398"/>
    </location>
</feature>
<feature type="repeat" description="1-1" evidence="4">
    <location>
        <begin position="191"/>
        <end position="202"/>
    </location>
</feature>
<feature type="repeat" description="1-2" evidence="4">
    <location>
        <begin position="210"/>
        <end position="221"/>
    </location>
</feature>
<feature type="repeat" description="1-3" evidence="4">
    <location>
        <begin position="227"/>
        <end position="238"/>
    </location>
</feature>
<feature type="repeat" description="1-4" evidence="4">
    <location>
        <begin position="244"/>
        <end position="255"/>
    </location>
</feature>
<feature type="repeat" description="2-1" evidence="4">
    <location>
        <begin position="259"/>
        <end position="269"/>
    </location>
</feature>
<feature type="repeat" description="2-2" evidence="4">
    <location>
        <begin position="273"/>
        <end position="283"/>
    </location>
</feature>
<feature type="repeat" description="2-3" evidence="4">
    <location>
        <begin position="287"/>
        <end position="297"/>
    </location>
</feature>
<feature type="region of interest" description="N-domain" evidence="4">
    <location>
        <begin position="20"/>
        <end position="197"/>
    </location>
</feature>
<feature type="region of interest" description="4 X approximate repeats" evidence="4">
    <location>
        <begin position="191"/>
        <end position="255"/>
    </location>
</feature>
<feature type="region of interest" description="P-domain" evidence="4">
    <location>
        <begin position="198"/>
        <end position="308"/>
    </location>
</feature>
<feature type="region of interest" description="Disordered" evidence="5">
    <location>
        <begin position="207"/>
        <end position="257"/>
    </location>
</feature>
<feature type="region of interest" description="3 X approximate repeats" evidence="4">
    <location>
        <begin position="259"/>
        <end position="297"/>
    </location>
</feature>
<feature type="region of interest" description="C-domain" evidence="4">
    <location>
        <begin position="309"/>
        <end position="398"/>
    </location>
</feature>
<feature type="region of interest" description="Disordered" evidence="5">
    <location>
        <begin position="334"/>
        <end position="398"/>
    </location>
</feature>
<feature type="short sequence motif" description="Prevents secretion from ER" evidence="4">
    <location>
        <begin position="395"/>
        <end position="398"/>
    </location>
</feature>
<feature type="compositionally biased region" description="Basic and acidic residues" evidence="5">
    <location>
        <begin position="207"/>
        <end position="251"/>
    </location>
</feature>
<feature type="compositionally biased region" description="Basic and acidic residues" evidence="5">
    <location>
        <begin position="337"/>
        <end position="372"/>
    </location>
</feature>
<feature type="compositionally biased region" description="Acidic residues" evidence="5">
    <location>
        <begin position="373"/>
        <end position="387"/>
    </location>
</feature>
<feature type="binding site" evidence="2">
    <location>
        <position position="109"/>
    </location>
    <ligand>
        <name>an alpha-D-glucoside</name>
        <dbReference type="ChEBI" id="CHEBI:22390"/>
    </ligand>
</feature>
<feature type="binding site" evidence="2">
    <location>
        <position position="111"/>
    </location>
    <ligand>
        <name>an alpha-D-glucoside</name>
        <dbReference type="ChEBI" id="CHEBI:22390"/>
    </ligand>
</feature>
<feature type="binding site" evidence="2">
    <location>
        <position position="128"/>
    </location>
    <ligand>
        <name>an alpha-D-glucoside</name>
        <dbReference type="ChEBI" id="CHEBI:22390"/>
    </ligand>
</feature>
<feature type="binding site" evidence="2">
    <location>
        <position position="135"/>
    </location>
    <ligand>
        <name>an alpha-D-glucoside</name>
        <dbReference type="ChEBI" id="CHEBI:22390"/>
    </ligand>
</feature>
<feature type="binding site" evidence="2">
    <location>
        <position position="317"/>
    </location>
    <ligand>
        <name>an alpha-D-glucoside</name>
        <dbReference type="ChEBI" id="CHEBI:22390"/>
    </ligand>
</feature>
<feature type="disulfide bond" evidence="3">
    <location>
        <begin position="105"/>
        <end position="137"/>
    </location>
</feature>
<feature type="sequence conflict" description="In Ref. 4; AA sequence." evidence="9" ref="4">
    <original>W</original>
    <variation>K</variation>
    <location>
        <position position="36"/>
    </location>
</feature>
<feature type="sequence conflict" description="In Ref. 4; AA sequence." evidence="9" ref="4">
    <original>H</original>
    <variation>A</variation>
    <location>
        <position position="41"/>
    </location>
</feature>
<feature type="sequence conflict" description="In Ref. 4; AA sequence." evidence="9" ref="4">
    <original>E</original>
    <variation>D</variation>
    <location>
        <position position="45"/>
    </location>
</feature>
<feature type="sequence conflict" description="In Ref. 4; AA sequence." evidence="9" ref="4">
    <original>G</original>
    <variation>E</variation>
    <location>
        <position position="47"/>
    </location>
</feature>
<feature type="sequence conflict" description="In Ref. 4; AA sequence." evidence="9" ref="4">
    <original>F</original>
    <variation>K</variation>
    <location>
        <position position="49"/>
    </location>
</feature>
<feature type="sequence conflict" description="In Ref. 3; BAC57964." evidence="9" ref="3">
    <original>N</original>
    <variation>P</variation>
    <location>
        <position position="205"/>
    </location>
</feature>
<feature type="sequence conflict" description="In Ref. 3; BAC57964." evidence="9" ref="3">
    <original>Y</original>
    <variation>F</variation>
    <location>
        <position position="285"/>
    </location>
</feature>
<sequence length="398" mass="45802">MKAVVLVVVSLLALSSINCDVFFEEKFPDDSWESNWVYSEHPGKEFGKFKLTAGKFFSDPEDDKGLKTSEDARFYALSRKFKPFSNEGKPLVVQFTVKHEQDIDCGGGYLKVFDCKLEQKDMHGETPYEIMFGPDICGPGTKKVHVIFSYKGKNHLIKKDIRCKDDVYTHLYTLIVKPDNTYEVLIDNEKVESGDLEADWDFLPNKKIKDPEAKKPEDWDDKPTIPDPEDKKPEDWDKPEHIPDPDATKPEDWDDEMDGEWEPPMIDNPDYKGVWAPKQIDNPAYKGPWVHPEIDNPEYTPDSNLYKRDEICAVGLDLWQVKSGTIFDDFLITDDPAAAKERGEVIKKRQEGEKKMKSEQDEAEREKEKAEKPDDEEDDEDLDDETGDAAPVEEHDEL</sequence>
<protein>
    <recommendedName>
        <fullName>Calreticulin</fullName>
    </recommendedName>
</protein>
<evidence type="ECO:0000250" key="1"/>
<evidence type="ECO:0000250" key="2">
    <source>
        <dbReference type="UniProtKB" id="P14211"/>
    </source>
</evidence>
<evidence type="ECO:0000250" key="3">
    <source>
        <dbReference type="UniProtKB" id="P27797"/>
    </source>
</evidence>
<evidence type="ECO:0000255" key="4"/>
<evidence type="ECO:0000256" key="5">
    <source>
        <dbReference type="SAM" id="MobiDB-lite"/>
    </source>
</evidence>
<evidence type="ECO:0000269" key="6">
    <source>
    </source>
</evidence>
<evidence type="ECO:0000269" key="7">
    <source>
    </source>
</evidence>
<evidence type="ECO:0000269" key="8">
    <source ref="1"/>
</evidence>
<evidence type="ECO:0000305" key="9"/>
<evidence type="ECO:0000312" key="10">
    <source>
        <dbReference type="EMBL" id="AAP50845.1"/>
    </source>
</evidence>
<evidence type="ECO:0000312" key="11">
    <source>
        <dbReference type="EMBL" id="BAC57964.1"/>
    </source>
</evidence>
<gene>
    <name evidence="11" type="primary">crt</name>
</gene>
<organism>
    <name type="scientific">Bombyx mori</name>
    <name type="common">Silk moth</name>
    <dbReference type="NCBI Taxonomy" id="7091"/>
    <lineage>
        <taxon>Eukaryota</taxon>
        <taxon>Metazoa</taxon>
        <taxon>Ecdysozoa</taxon>
        <taxon>Arthropoda</taxon>
        <taxon>Hexapoda</taxon>
        <taxon>Insecta</taxon>
        <taxon>Pterygota</taxon>
        <taxon>Neoptera</taxon>
        <taxon>Endopterygota</taxon>
        <taxon>Lepidoptera</taxon>
        <taxon>Glossata</taxon>
        <taxon>Ditrysia</taxon>
        <taxon>Bombycoidea</taxon>
        <taxon>Bombycidae</taxon>
        <taxon>Bombycinae</taxon>
        <taxon>Bombyx</taxon>
    </lineage>
</organism>